<feature type="chain" id="PRO_0000296556" description="Large ribosomal subunit protein bL32B">
    <location>
        <begin position="1"/>
        <end position="60"/>
    </location>
</feature>
<feature type="region of interest" description="Disordered" evidence="2">
    <location>
        <begin position="1"/>
        <end position="20"/>
    </location>
</feature>
<feature type="compositionally biased region" description="Basic residues" evidence="2">
    <location>
        <begin position="1"/>
        <end position="19"/>
    </location>
</feature>
<name>RL322_SACEN</name>
<evidence type="ECO:0000255" key="1">
    <source>
        <dbReference type="HAMAP-Rule" id="MF_00340"/>
    </source>
</evidence>
<evidence type="ECO:0000256" key="2">
    <source>
        <dbReference type="SAM" id="MobiDB-lite"/>
    </source>
</evidence>
<evidence type="ECO:0000305" key="3"/>
<reference key="1">
    <citation type="journal article" date="2007" name="Nat. Biotechnol.">
        <title>Complete genome sequence of the erythromycin-producing bacterium Saccharopolyspora erythraea NRRL23338.</title>
        <authorList>
            <person name="Oliynyk M."/>
            <person name="Samborskyy M."/>
            <person name="Lester J.B."/>
            <person name="Mironenko T."/>
            <person name="Scott N."/>
            <person name="Dickens S."/>
            <person name="Haydock S.F."/>
            <person name="Leadlay P.F."/>
        </authorList>
    </citation>
    <scope>NUCLEOTIDE SEQUENCE [LARGE SCALE GENOMIC DNA]</scope>
    <source>
        <strain>ATCC 11635 / DSM 40517 / JCM 4748 / NBRC 13426 / NCIMB 8594 / NRRL 2338</strain>
    </source>
</reference>
<sequence length="60" mass="6799">MAVPKRKMSRANTRHRRSQWKASAPTLVQCSNRACREPKLPHVACPSCGQYDGRQIHEPA</sequence>
<gene>
    <name evidence="1" type="primary">rpmF2</name>
    <name type="ordered locus">SACE_6101</name>
</gene>
<organism>
    <name type="scientific">Saccharopolyspora erythraea (strain ATCC 11635 / DSM 40517 / JCM 4748 / NBRC 13426 / NCIMB 8594 / NRRL 2338)</name>
    <dbReference type="NCBI Taxonomy" id="405948"/>
    <lineage>
        <taxon>Bacteria</taxon>
        <taxon>Bacillati</taxon>
        <taxon>Actinomycetota</taxon>
        <taxon>Actinomycetes</taxon>
        <taxon>Pseudonocardiales</taxon>
        <taxon>Pseudonocardiaceae</taxon>
        <taxon>Saccharopolyspora</taxon>
    </lineage>
</organism>
<keyword id="KW-1185">Reference proteome</keyword>
<keyword id="KW-0687">Ribonucleoprotein</keyword>
<keyword id="KW-0689">Ribosomal protein</keyword>
<comment type="similarity">
    <text evidence="1">Belongs to the bacterial ribosomal protein bL32 family.</text>
</comment>
<protein>
    <recommendedName>
        <fullName evidence="1">Large ribosomal subunit protein bL32B</fullName>
    </recommendedName>
    <alternativeName>
        <fullName evidence="3">50S ribosomal protein L32 2</fullName>
    </alternativeName>
</protein>
<proteinExistence type="inferred from homology"/>
<accession>A4FMJ9</accession>
<dbReference type="EMBL" id="AM420293">
    <property type="protein sequence ID" value="CAM05274.1"/>
    <property type="molecule type" value="Genomic_DNA"/>
</dbReference>
<dbReference type="RefSeq" id="WP_009947558.1">
    <property type="nucleotide sequence ID" value="NC_009142.1"/>
</dbReference>
<dbReference type="SMR" id="A4FMJ9"/>
<dbReference type="STRING" id="405948.SACE_6101"/>
<dbReference type="KEGG" id="sen:SACE_6101"/>
<dbReference type="eggNOG" id="COG0333">
    <property type="taxonomic scope" value="Bacteria"/>
</dbReference>
<dbReference type="HOGENOM" id="CLU_129084_1_1_11"/>
<dbReference type="OrthoDB" id="9807363at2"/>
<dbReference type="Proteomes" id="UP000006728">
    <property type="component" value="Chromosome"/>
</dbReference>
<dbReference type="GO" id="GO:0015934">
    <property type="term" value="C:large ribosomal subunit"/>
    <property type="evidence" value="ECO:0007669"/>
    <property type="project" value="InterPro"/>
</dbReference>
<dbReference type="GO" id="GO:0003735">
    <property type="term" value="F:structural constituent of ribosome"/>
    <property type="evidence" value="ECO:0007669"/>
    <property type="project" value="InterPro"/>
</dbReference>
<dbReference type="GO" id="GO:0006412">
    <property type="term" value="P:translation"/>
    <property type="evidence" value="ECO:0007669"/>
    <property type="project" value="UniProtKB-UniRule"/>
</dbReference>
<dbReference type="HAMAP" id="MF_00340">
    <property type="entry name" value="Ribosomal_bL32"/>
    <property type="match status" value="1"/>
</dbReference>
<dbReference type="InterPro" id="IPR002677">
    <property type="entry name" value="Ribosomal_bL32"/>
</dbReference>
<dbReference type="InterPro" id="IPR044957">
    <property type="entry name" value="Ribosomal_bL32_bact"/>
</dbReference>
<dbReference type="InterPro" id="IPR011332">
    <property type="entry name" value="Ribosomal_zn-bd"/>
</dbReference>
<dbReference type="NCBIfam" id="TIGR01031">
    <property type="entry name" value="rpmF_bact"/>
    <property type="match status" value="1"/>
</dbReference>
<dbReference type="PANTHER" id="PTHR35534">
    <property type="entry name" value="50S RIBOSOMAL PROTEIN L32"/>
    <property type="match status" value="1"/>
</dbReference>
<dbReference type="PANTHER" id="PTHR35534:SF1">
    <property type="entry name" value="LARGE RIBOSOMAL SUBUNIT PROTEIN BL32"/>
    <property type="match status" value="1"/>
</dbReference>
<dbReference type="Pfam" id="PF01783">
    <property type="entry name" value="Ribosomal_L32p"/>
    <property type="match status" value="1"/>
</dbReference>
<dbReference type="SUPFAM" id="SSF57829">
    <property type="entry name" value="Zn-binding ribosomal proteins"/>
    <property type="match status" value="1"/>
</dbReference>